<proteinExistence type="evidence at protein level"/>
<accession>P31440</accession>
<accession>P76726</accession>
<accession>Q2M7X7</accession>
<feature type="chain" id="PRO_0000169621" description="Adenine permease AdeQ">
    <location>
        <begin position="1"/>
        <end position="444"/>
    </location>
</feature>
<feature type="topological domain" description="Cytoplasmic" evidence="1">
    <location>
        <begin position="1"/>
        <end position="29"/>
    </location>
</feature>
<feature type="transmembrane region" description="Helical" evidence="1">
    <location>
        <begin position="30"/>
        <end position="53"/>
    </location>
</feature>
<feature type="topological domain" description="Periplasmic" evidence="1">
    <location>
        <begin position="54"/>
        <end position="63"/>
    </location>
</feature>
<feature type="transmembrane region" description="Helical" evidence="1">
    <location>
        <begin position="64"/>
        <end position="82"/>
    </location>
</feature>
<feature type="topological domain" description="Cytoplasmic" evidence="1">
    <location>
        <begin position="83"/>
        <end position="84"/>
    </location>
</feature>
<feature type="transmembrane region" description="Discontinuously helical" evidence="1">
    <location>
        <begin position="85"/>
        <end position="101"/>
    </location>
</feature>
<feature type="topological domain" description="Periplasmic" evidence="1">
    <location>
        <begin position="102"/>
        <end position="113"/>
    </location>
</feature>
<feature type="transmembrane region" description="Helical" evidence="1">
    <location>
        <begin position="114"/>
        <end position="133"/>
    </location>
</feature>
<feature type="topological domain" description="Cytoplasmic" evidence="1">
    <location>
        <begin position="134"/>
        <end position="145"/>
    </location>
</feature>
<feature type="transmembrane region" description="Helical" evidence="1">
    <location>
        <begin position="146"/>
        <end position="166"/>
    </location>
</feature>
<feature type="topological domain" description="Periplasmic" evidence="1">
    <location>
        <begin position="167"/>
        <end position="182"/>
    </location>
</feature>
<feature type="transmembrane region" description="Helical" evidence="1">
    <location>
        <begin position="183"/>
        <end position="200"/>
    </location>
</feature>
<feature type="topological domain" description="Cytoplasmic" evidence="1">
    <location>
        <begin position="201"/>
        <end position="204"/>
    </location>
</feature>
<feature type="transmembrane region" description="Helical" evidence="1">
    <location>
        <begin position="205"/>
        <end position="223"/>
    </location>
</feature>
<feature type="topological domain" description="Periplasmic" evidence="1">
    <location>
        <begin position="224"/>
        <end position="251"/>
    </location>
</feature>
<feature type="transmembrane region" description="Helical" evidence="1">
    <location>
        <begin position="252"/>
        <end position="280"/>
    </location>
</feature>
<feature type="topological domain" description="Cytoplasmic" evidence="1">
    <location>
        <begin position="281"/>
        <end position="293"/>
    </location>
</feature>
<feature type="transmembrane region" description="Helical" evidence="1">
    <location>
        <begin position="294"/>
        <end position="309"/>
    </location>
</feature>
<feature type="topological domain" description="Periplasmic" evidence="1">
    <location>
        <begin position="310"/>
        <end position="311"/>
    </location>
</feature>
<feature type="transmembrane region" description="Discontinuously helical" evidence="1">
    <location>
        <begin position="312"/>
        <end position="327"/>
    </location>
</feature>
<feature type="topological domain" description="Cytoplasmic" evidence="1">
    <location>
        <begin position="328"/>
        <end position="331"/>
    </location>
</feature>
<feature type="transmembrane region" description="Helical" evidence="1">
    <location>
        <begin position="332"/>
        <end position="346"/>
    </location>
</feature>
<feature type="topological domain" description="Periplasmic" evidence="1">
    <location>
        <begin position="347"/>
        <end position="357"/>
    </location>
</feature>
<feature type="transmembrane region" description="Helical" evidence="1">
    <location>
        <begin position="358"/>
        <end position="377"/>
    </location>
</feature>
<feature type="topological domain" description="Cytoplasmic" evidence="1">
    <location>
        <begin position="378"/>
        <end position="382"/>
    </location>
</feature>
<feature type="intramembrane region" description="Discontinuously helical" evidence="1">
    <location>
        <begin position="383"/>
        <end position="418"/>
    </location>
</feature>
<feature type="topological domain" description="Cytoplasmic" evidence="1">
    <location>
        <begin position="419"/>
        <end position="444"/>
    </location>
</feature>
<reference key="1">
    <citation type="journal article" date="1993" name="Genomics">
        <title>DNA sequence and analysis of 136 kilobases of the Escherichia coli genome: organizational symmetry around the origin of replication.</title>
        <authorList>
            <person name="Burland V.D."/>
            <person name="Plunkett G. III"/>
            <person name="Daniels D.L."/>
            <person name="Blattner F.R."/>
        </authorList>
    </citation>
    <scope>NUCLEOTIDE SEQUENCE [LARGE SCALE GENOMIC DNA]</scope>
    <source>
        <strain>K12 / MG1655 / ATCC 47076</strain>
    </source>
</reference>
<reference key="2">
    <citation type="journal article" date="1997" name="Science">
        <title>The complete genome sequence of Escherichia coli K-12.</title>
        <authorList>
            <person name="Blattner F.R."/>
            <person name="Plunkett G. III"/>
            <person name="Bloch C.A."/>
            <person name="Perna N.T."/>
            <person name="Burland V."/>
            <person name="Riley M."/>
            <person name="Collado-Vides J."/>
            <person name="Glasner J.D."/>
            <person name="Rode C.K."/>
            <person name="Mayhew G.F."/>
            <person name="Gregor J."/>
            <person name="Davis N.W."/>
            <person name="Kirkpatrick H.A."/>
            <person name="Goeden M.A."/>
            <person name="Rose D.J."/>
            <person name="Mau B."/>
            <person name="Shao Y."/>
        </authorList>
    </citation>
    <scope>NUCLEOTIDE SEQUENCE [LARGE SCALE GENOMIC DNA]</scope>
    <source>
        <strain>K12 / MG1655 / ATCC 47076</strain>
    </source>
</reference>
<reference key="3">
    <citation type="journal article" date="2006" name="Mol. Syst. Biol.">
        <title>Highly accurate genome sequences of Escherichia coli K-12 strains MG1655 and W3110.</title>
        <authorList>
            <person name="Hayashi K."/>
            <person name="Morooka N."/>
            <person name="Yamamoto Y."/>
            <person name="Fujita K."/>
            <person name="Isono K."/>
            <person name="Choi S."/>
            <person name="Ohtsubo E."/>
            <person name="Baba T."/>
            <person name="Wanner B.L."/>
            <person name="Mori H."/>
            <person name="Horiuchi T."/>
        </authorList>
    </citation>
    <scope>NUCLEOTIDE SEQUENCE [LARGE SCALE GENOMIC DNA]</scope>
    <source>
        <strain>K12 / W3110 / ATCC 27325 / DSM 5911</strain>
    </source>
</reference>
<reference key="4">
    <citation type="journal article" date="2005" name="Science">
        <title>Global topology analysis of the Escherichia coli inner membrane proteome.</title>
        <authorList>
            <person name="Daley D.O."/>
            <person name="Rapp M."/>
            <person name="Granseth E."/>
            <person name="Melen K."/>
            <person name="Drew D."/>
            <person name="von Heijne G."/>
        </authorList>
    </citation>
    <scope>SUBCELLULAR LOCATION [LARGE SCALE ANALYSIS]</scope>
    <source>
        <strain>K12 / MG1655 / ATCC 47076</strain>
    </source>
</reference>
<reference key="5">
    <citation type="journal article" date="2013" name="J. Biol. Chem.">
        <title>Functional identification of the hypoxanthine/guanine transporters YjcD and YgfQ and the adenine transporters PurP and YicO of Escherichia coli K-12.</title>
        <authorList>
            <person name="Papakostas K."/>
            <person name="Botou M."/>
            <person name="Frillingos S."/>
        </authorList>
    </citation>
    <scope>FUNCTION</scope>
    <scope>BIOPHYSICOCHEMICAL PROPERTIES</scope>
    <scope>SUBCELLULAR LOCATION</scope>
    <scope>GENE NAME</scope>
    <source>
        <strain>K12</strain>
    </source>
</reference>
<name>ADEQ_ECOLI</name>
<sequence>MNNDNTDYVSNESGTLSRLFKLPQHGTTVRTELIAGMTTFLTMVYIVFVNPQILGAAQMDPKVVFVTTCLIAGIGSIAMGIFANLPVALAPAMGLNAFFAFVVVGAMGISWQTGMGAIFWGAVGLFLLTLFRIRYWMISNIPLSLRIGITSGIGLFIALMGLKNTGVIVANKDTLVMIGDLSSHGVLLGILGFFIITVLSSRHFHAAVLVSIVVTSCCGLFFGDVHFSGVYSIPPDISGVIGEVDLSGALTLELAGIIFSFMLINLFDSSGTLIGVTDKAGLIDGNGKFPNMNKALYVDSVSSVAGAFIGTSSVTAYIESTSGVAVGGRTGLTAVVVGVMFLLVMFFSPLVAIVPPYATAGALIFVGVLMTSSLARVNWDDFTESVPAFITTVMMPFTFSITEGIALGFMSYCIMKVCTGRWRDLNLCVVVVAALFALKIILVD</sequence>
<dbReference type="EMBL" id="L10328">
    <property type="protein sequence ID" value="AAA62016.1"/>
    <property type="status" value="ALT_INIT"/>
    <property type="molecule type" value="Genomic_DNA"/>
</dbReference>
<dbReference type="EMBL" id="U00096">
    <property type="protein sequence ID" value="AAC76687.2"/>
    <property type="molecule type" value="Genomic_DNA"/>
</dbReference>
<dbReference type="EMBL" id="AP009048">
    <property type="protein sequence ID" value="BAE77629.1"/>
    <property type="molecule type" value="Genomic_DNA"/>
</dbReference>
<dbReference type="PIR" id="A65168">
    <property type="entry name" value="A65168"/>
</dbReference>
<dbReference type="RefSeq" id="NP_418120.2">
    <property type="nucleotide sequence ID" value="NC_000913.3"/>
</dbReference>
<dbReference type="RefSeq" id="WP_001403836.1">
    <property type="nucleotide sequence ID" value="NZ_SSZK01000043.1"/>
</dbReference>
<dbReference type="SMR" id="P31440"/>
<dbReference type="BioGRID" id="4260893">
    <property type="interactions" value="115"/>
</dbReference>
<dbReference type="FunCoup" id="P31440">
    <property type="interactions" value="732"/>
</dbReference>
<dbReference type="IntAct" id="P31440">
    <property type="interactions" value="1"/>
</dbReference>
<dbReference type="STRING" id="511145.b3664"/>
<dbReference type="TCDB" id="2.A.40.7.4">
    <property type="family name" value="the nucleobase/ascorbate transporter (nat) or nucleobase:cation symporter-2 (ncs2) family"/>
</dbReference>
<dbReference type="PaxDb" id="511145-b3664"/>
<dbReference type="DNASU" id="948174"/>
<dbReference type="EnsemblBacteria" id="AAC76687">
    <property type="protein sequence ID" value="AAC76687"/>
    <property type="gene ID" value="b3664"/>
</dbReference>
<dbReference type="GeneID" id="948174"/>
<dbReference type="KEGG" id="ecj:JW5636"/>
<dbReference type="KEGG" id="eco:b3664"/>
<dbReference type="PATRIC" id="fig|511145.12.peg.3786"/>
<dbReference type="EchoBASE" id="EB1642"/>
<dbReference type="eggNOG" id="COG2252">
    <property type="taxonomic scope" value="Bacteria"/>
</dbReference>
<dbReference type="HOGENOM" id="CLU_024508_0_1_6"/>
<dbReference type="InParanoid" id="P31440"/>
<dbReference type="OMA" id="AYCTDAF"/>
<dbReference type="OrthoDB" id="9808458at2"/>
<dbReference type="PhylomeDB" id="P31440"/>
<dbReference type="BioCyc" id="EcoCyc:EG11691-MONOMER"/>
<dbReference type="BioCyc" id="MetaCyc:EG11691-MONOMER"/>
<dbReference type="SABIO-RK" id="P31440"/>
<dbReference type="PRO" id="PR:P31440"/>
<dbReference type="Proteomes" id="UP000000625">
    <property type="component" value="Chromosome"/>
</dbReference>
<dbReference type="GO" id="GO:0005886">
    <property type="term" value="C:plasma membrane"/>
    <property type="evidence" value="ECO:0000314"/>
    <property type="project" value="EcoCyc"/>
</dbReference>
<dbReference type="GO" id="GO:0015207">
    <property type="term" value="F:adenine transmembrane transporter activity"/>
    <property type="evidence" value="ECO:0000315"/>
    <property type="project" value="EcoCyc"/>
</dbReference>
<dbReference type="GO" id="GO:0015853">
    <property type="term" value="P:adenine transport"/>
    <property type="evidence" value="ECO:0000315"/>
    <property type="project" value="EcoCyc"/>
</dbReference>
<dbReference type="InterPro" id="IPR045018">
    <property type="entry name" value="Azg-like"/>
</dbReference>
<dbReference type="InterPro" id="IPR026033">
    <property type="entry name" value="Azg-like_bact_archaea"/>
</dbReference>
<dbReference type="InterPro" id="IPR006043">
    <property type="entry name" value="NCS2"/>
</dbReference>
<dbReference type="PANTHER" id="PTHR43337">
    <property type="entry name" value="XANTHINE/URACIL PERMEASE C887.17-RELATED"/>
    <property type="match status" value="1"/>
</dbReference>
<dbReference type="PANTHER" id="PTHR43337:SF1">
    <property type="entry name" value="XANTHINE_URACIL PERMEASE C887.17-RELATED"/>
    <property type="match status" value="1"/>
</dbReference>
<dbReference type="Pfam" id="PF00860">
    <property type="entry name" value="Xan_ur_permease"/>
    <property type="match status" value="1"/>
</dbReference>
<dbReference type="PIRSF" id="PIRSF005353">
    <property type="entry name" value="PbuG"/>
    <property type="match status" value="1"/>
</dbReference>
<keyword id="KW-0997">Cell inner membrane</keyword>
<keyword id="KW-1003">Cell membrane</keyword>
<keyword id="KW-0472">Membrane</keyword>
<keyword id="KW-1185">Reference proteome</keyword>
<keyword id="KW-0812">Transmembrane</keyword>
<keyword id="KW-1133">Transmembrane helix</keyword>
<keyword id="KW-0813">Transport</keyword>
<organism>
    <name type="scientific">Escherichia coli (strain K12)</name>
    <dbReference type="NCBI Taxonomy" id="83333"/>
    <lineage>
        <taxon>Bacteria</taxon>
        <taxon>Pseudomonadati</taxon>
        <taxon>Pseudomonadota</taxon>
        <taxon>Gammaproteobacteria</taxon>
        <taxon>Enterobacterales</taxon>
        <taxon>Enterobacteriaceae</taxon>
        <taxon>Escherichia</taxon>
    </lineage>
</organism>
<gene>
    <name type="primary">adeQ</name>
    <name type="synonym">yicO</name>
    <name type="ordered locus">b3664</name>
    <name type="ordered locus">JW5636</name>
</gene>
<protein>
    <recommendedName>
        <fullName>Adenine permease AdeQ</fullName>
    </recommendedName>
</protein>
<comment type="function">
    <text evidence="3">High-affinity transporter for adenine.</text>
</comment>
<comment type="biophysicochemical properties">
    <kinetics>
        <KM evidence="3">6.5 uM for adenine</KM>
        <Vmax evidence="3">11.0 nmol/min/mg enzyme</Vmax>
    </kinetics>
</comment>
<comment type="subcellular location">
    <subcellularLocation>
        <location evidence="2 3">Cell inner membrane</location>
        <topology evidence="2 3">Multi-pass membrane protein</topology>
    </subcellularLocation>
</comment>
<comment type="similarity">
    <text evidence="4">Belongs to the nucleobase:cation symporter-2 (NCS2) (TC 2.A.40) family. Azg-like subfamily.</text>
</comment>
<comment type="sequence caution" evidence="4">
    <conflict type="erroneous initiation">
        <sequence resource="EMBL-CDS" id="AAA62016"/>
    </conflict>
</comment>
<evidence type="ECO:0000255" key="1"/>
<evidence type="ECO:0000269" key="2">
    <source>
    </source>
</evidence>
<evidence type="ECO:0000269" key="3">
    <source>
    </source>
</evidence>
<evidence type="ECO:0000305" key="4"/>